<comment type="function">
    <text evidence="1">With CysN forms the ATP sulfurylase (ATPS) that catalyzes the adenylation of sulfate producing adenosine 5'-phosphosulfate (APS) and diphosphate, the first enzymatic step in sulfur assimilation pathway. APS synthesis involves the formation of a high-energy phosphoric-sulfuric acid anhydride bond driven by GTP hydrolysis by CysN coupled to ATP hydrolysis by CysD.</text>
</comment>
<comment type="catalytic activity">
    <reaction evidence="1">
        <text>sulfate + ATP + H(+) = adenosine 5'-phosphosulfate + diphosphate</text>
        <dbReference type="Rhea" id="RHEA:18133"/>
        <dbReference type="ChEBI" id="CHEBI:15378"/>
        <dbReference type="ChEBI" id="CHEBI:16189"/>
        <dbReference type="ChEBI" id="CHEBI:30616"/>
        <dbReference type="ChEBI" id="CHEBI:33019"/>
        <dbReference type="ChEBI" id="CHEBI:58243"/>
        <dbReference type="EC" id="2.7.7.4"/>
    </reaction>
</comment>
<comment type="pathway">
    <text evidence="1">Sulfur metabolism; hydrogen sulfide biosynthesis; sulfite from sulfate: step 1/3.</text>
</comment>
<comment type="subunit">
    <text evidence="1">Heterodimer composed of CysD, the smaller subunit, and CysN.</text>
</comment>
<comment type="similarity">
    <text evidence="1">Belongs to the PAPS reductase family. CysD subfamily.</text>
</comment>
<gene>
    <name evidence="1" type="primary">cysD</name>
    <name type="ordered locus">Mpop_2191</name>
</gene>
<feature type="chain" id="PRO_1000117946" description="Sulfate adenylyltransferase subunit 2">
    <location>
        <begin position="1"/>
        <end position="309"/>
    </location>
</feature>
<organism>
    <name type="scientific">Methylorubrum populi (strain ATCC BAA-705 / NCIMB 13946 / BJ001)</name>
    <name type="common">Methylobacterium populi</name>
    <dbReference type="NCBI Taxonomy" id="441620"/>
    <lineage>
        <taxon>Bacteria</taxon>
        <taxon>Pseudomonadati</taxon>
        <taxon>Pseudomonadota</taxon>
        <taxon>Alphaproteobacteria</taxon>
        <taxon>Hyphomicrobiales</taxon>
        <taxon>Methylobacteriaceae</taxon>
        <taxon>Methylorubrum</taxon>
    </lineage>
</organism>
<evidence type="ECO:0000255" key="1">
    <source>
        <dbReference type="HAMAP-Rule" id="MF_00064"/>
    </source>
</evidence>
<accession>B1Z7C1</accession>
<protein>
    <recommendedName>
        <fullName evidence="1">Sulfate adenylyltransferase subunit 2</fullName>
        <ecNumber evidence="1">2.7.7.4</ecNumber>
    </recommendedName>
    <alternativeName>
        <fullName evidence="1">ATP-sulfurylase small subunit</fullName>
    </alternativeName>
    <alternativeName>
        <fullName evidence="1">Sulfate adenylate transferase</fullName>
        <shortName evidence="1">SAT</shortName>
    </alternativeName>
</protein>
<keyword id="KW-0067">ATP-binding</keyword>
<keyword id="KW-0547">Nucleotide-binding</keyword>
<keyword id="KW-0548">Nucleotidyltransferase</keyword>
<keyword id="KW-0808">Transferase</keyword>
<sequence length="309" mass="35238">MSAAVAAPARTRLTHLQRLEAESIHIFREAVAEAENPVMLYSIGKDSSVLLHLALKAFAPGRLPFPLLHIDTTWKFREMIAFRDRRAKELGLELIVHTNQDGLAKGIGPVSHGSEVHTDVMKTQALRQALDTYKYDVAFGGARRDEEASRAKERIVSLRNAQHRWDPKRQRAEPWHLYNFKKRRGESFRVFPLSNWTELDIWLYIEQENIPIVPLYFAAERPVVERDGQLIMVDDDRFPLEPGETPQQRQVRFRTLGCYPLTGAVESPAATLPEIIGETLAARTSERQGRVIDKDGAGAMERKKQEGYF</sequence>
<proteinExistence type="inferred from homology"/>
<reference key="1">
    <citation type="submission" date="2008-04" db="EMBL/GenBank/DDBJ databases">
        <title>Complete sequence of chromosome of Methylobacterium populi BJ001.</title>
        <authorList>
            <consortium name="US DOE Joint Genome Institute"/>
            <person name="Copeland A."/>
            <person name="Lucas S."/>
            <person name="Lapidus A."/>
            <person name="Glavina del Rio T."/>
            <person name="Dalin E."/>
            <person name="Tice H."/>
            <person name="Bruce D."/>
            <person name="Goodwin L."/>
            <person name="Pitluck S."/>
            <person name="Chertkov O."/>
            <person name="Brettin T."/>
            <person name="Detter J.C."/>
            <person name="Han C."/>
            <person name="Kuske C.R."/>
            <person name="Schmutz J."/>
            <person name="Larimer F."/>
            <person name="Land M."/>
            <person name="Hauser L."/>
            <person name="Kyrpides N."/>
            <person name="Mikhailova N."/>
            <person name="Marx C."/>
            <person name="Richardson P."/>
        </authorList>
    </citation>
    <scope>NUCLEOTIDE SEQUENCE [LARGE SCALE GENOMIC DNA]</scope>
    <source>
        <strain>ATCC BAA-705 / NCIMB 13946 / BJ001</strain>
    </source>
</reference>
<name>CYSD_METPB</name>
<dbReference type="EC" id="2.7.7.4" evidence="1"/>
<dbReference type="EMBL" id="CP001029">
    <property type="protein sequence ID" value="ACB80353.1"/>
    <property type="molecule type" value="Genomic_DNA"/>
</dbReference>
<dbReference type="RefSeq" id="WP_012454087.1">
    <property type="nucleotide sequence ID" value="NC_010725.1"/>
</dbReference>
<dbReference type="SMR" id="B1Z7C1"/>
<dbReference type="STRING" id="441620.Mpop_2191"/>
<dbReference type="KEGG" id="mpo:Mpop_2191"/>
<dbReference type="eggNOG" id="COG0175">
    <property type="taxonomic scope" value="Bacteria"/>
</dbReference>
<dbReference type="HOGENOM" id="CLU_043026_0_0_5"/>
<dbReference type="OrthoDB" id="9772604at2"/>
<dbReference type="UniPathway" id="UPA00140">
    <property type="reaction ID" value="UER00204"/>
</dbReference>
<dbReference type="Proteomes" id="UP000007136">
    <property type="component" value="Chromosome"/>
</dbReference>
<dbReference type="GO" id="GO:0005524">
    <property type="term" value="F:ATP binding"/>
    <property type="evidence" value="ECO:0007669"/>
    <property type="project" value="UniProtKB-KW"/>
</dbReference>
<dbReference type="GO" id="GO:0004781">
    <property type="term" value="F:sulfate adenylyltransferase (ATP) activity"/>
    <property type="evidence" value="ECO:0007669"/>
    <property type="project" value="UniProtKB-UniRule"/>
</dbReference>
<dbReference type="GO" id="GO:0070814">
    <property type="term" value="P:hydrogen sulfide biosynthetic process"/>
    <property type="evidence" value="ECO:0007669"/>
    <property type="project" value="UniProtKB-UniRule"/>
</dbReference>
<dbReference type="GO" id="GO:0000103">
    <property type="term" value="P:sulfate assimilation"/>
    <property type="evidence" value="ECO:0007669"/>
    <property type="project" value="UniProtKB-UniRule"/>
</dbReference>
<dbReference type="FunFam" id="3.40.50.620:FF:000002">
    <property type="entry name" value="Sulfate adenylyltransferase subunit 2"/>
    <property type="match status" value="1"/>
</dbReference>
<dbReference type="Gene3D" id="3.40.50.620">
    <property type="entry name" value="HUPs"/>
    <property type="match status" value="1"/>
</dbReference>
<dbReference type="HAMAP" id="MF_00064">
    <property type="entry name" value="Sulf_adenylyltr_sub2"/>
    <property type="match status" value="1"/>
</dbReference>
<dbReference type="InterPro" id="IPR002500">
    <property type="entry name" value="PAPS_reduct_dom"/>
</dbReference>
<dbReference type="InterPro" id="IPR014729">
    <property type="entry name" value="Rossmann-like_a/b/a_fold"/>
</dbReference>
<dbReference type="InterPro" id="IPR011784">
    <property type="entry name" value="SO4_adenylTrfase_ssu"/>
</dbReference>
<dbReference type="InterPro" id="IPR050128">
    <property type="entry name" value="Sulfate_adenylyltrnsfr_sub2"/>
</dbReference>
<dbReference type="NCBIfam" id="TIGR02039">
    <property type="entry name" value="CysD"/>
    <property type="match status" value="1"/>
</dbReference>
<dbReference type="NCBIfam" id="NF003587">
    <property type="entry name" value="PRK05253.1"/>
    <property type="match status" value="1"/>
</dbReference>
<dbReference type="NCBIfam" id="NF009214">
    <property type="entry name" value="PRK12563.1"/>
    <property type="match status" value="1"/>
</dbReference>
<dbReference type="PANTHER" id="PTHR43196">
    <property type="entry name" value="SULFATE ADENYLYLTRANSFERASE SUBUNIT 2"/>
    <property type="match status" value="1"/>
</dbReference>
<dbReference type="PANTHER" id="PTHR43196:SF1">
    <property type="entry name" value="SULFATE ADENYLYLTRANSFERASE SUBUNIT 2"/>
    <property type="match status" value="1"/>
</dbReference>
<dbReference type="Pfam" id="PF01507">
    <property type="entry name" value="PAPS_reduct"/>
    <property type="match status" value="1"/>
</dbReference>
<dbReference type="PIRSF" id="PIRSF002936">
    <property type="entry name" value="CysDAde_trans"/>
    <property type="match status" value="1"/>
</dbReference>
<dbReference type="SUPFAM" id="SSF52402">
    <property type="entry name" value="Adenine nucleotide alpha hydrolases-like"/>
    <property type="match status" value="1"/>
</dbReference>